<accession>P34705</accession>
<gene>
    <name type="primary">kup-1</name>
    <name type="ORF">F10C2.2</name>
</gene>
<evidence type="ECO:0000256" key="1">
    <source>
        <dbReference type="SAM" id="MobiDB-lite"/>
    </source>
</evidence>
<name>KUP1_CAEEL</name>
<dbReference type="EMBL" id="L12247">
    <property type="protein sequence ID" value="AAA28102.1"/>
    <property type="molecule type" value="mRNA"/>
</dbReference>
<dbReference type="EMBL" id="Z81497">
    <property type="protein sequence ID" value="CAB04080.1"/>
    <property type="molecule type" value="Genomic_DNA"/>
</dbReference>
<dbReference type="PIR" id="T20701">
    <property type="entry name" value="T20701"/>
</dbReference>
<dbReference type="RefSeq" id="NP_001379208.1">
    <property type="nucleotide sequence ID" value="NM_001392622.1"/>
</dbReference>
<dbReference type="RefSeq" id="NP_506016.1">
    <property type="nucleotide sequence ID" value="NM_073615.3"/>
</dbReference>
<dbReference type="SMR" id="P34705"/>
<dbReference type="BioGRID" id="44674">
    <property type="interactions" value="1"/>
</dbReference>
<dbReference type="FunCoup" id="P34705">
    <property type="interactions" value="314"/>
</dbReference>
<dbReference type="STRING" id="6239.F10C2.2.1"/>
<dbReference type="iPTMnet" id="P34705"/>
<dbReference type="PaxDb" id="6239-F10C2.2"/>
<dbReference type="PeptideAtlas" id="P34705"/>
<dbReference type="EnsemblMetazoa" id="F10C2.2.1">
    <property type="protein sequence ID" value="F10C2.2.1"/>
    <property type="gene ID" value="WBGene00002241"/>
</dbReference>
<dbReference type="GeneID" id="179651"/>
<dbReference type="UCSC" id="F10C2.2">
    <property type="organism name" value="c. elegans"/>
</dbReference>
<dbReference type="AGR" id="WB:WBGene00002241"/>
<dbReference type="WormBase" id="F10C2.2">
    <property type="protein sequence ID" value="CE09306"/>
    <property type="gene ID" value="WBGene00002241"/>
    <property type="gene designation" value="kup-1"/>
</dbReference>
<dbReference type="eggNOG" id="ENOG502S8JM">
    <property type="taxonomic scope" value="Eukaryota"/>
</dbReference>
<dbReference type="HOGENOM" id="CLU_724095_0_0_1"/>
<dbReference type="InParanoid" id="P34705"/>
<dbReference type="OMA" id="MREEQGD"/>
<dbReference type="OrthoDB" id="422106at2759"/>
<dbReference type="PRO" id="PR:P34705"/>
<dbReference type="Proteomes" id="UP000001940">
    <property type="component" value="Chromosome V"/>
</dbReference>
<dbReference type="Bgee" id="WBGene00002241">
    <property type="expression patterns" value="Expressed in germ line (C elegans) and 4 other cell types or tissues"/>
</dbReference>
<organism>
    <name type="scientific">Caenorhabditis elegans</name>
    <dbReference type="NCBI Taxonomy" id="6239"/>
    <lineage>
        <taxon>Eukaryota</taxon>
        <taxon>Metazoa</taxon>
        <taxon>Ecdysozoa</taxon>
        <taxon>Nematoda</taxon>
        <taxon>Chromadorea</taxon>
        <taxon>Rhabditida</taxon>
        <taxon>Rhabditina</taxon>
        <taxon>Rhabditomorpha</taxon>
        <taxon>Rhabditoidea</taxon>
        <taxon>Rhabditidae</taxon>
        <taxon>Peloderinae</taxon>
        <taxon>Caenorhabditis</taxon>
    </lineage>
</organism>
<protein>
    <recommendedName>
        <fullName>Protein kup-1</fullName>
    </recommendedName>
</protein>
<feature type="chain" id="PRO_0000084342" description="Protein kup-1">
    <location>
        <begin position="1"/>
        <end position="385"/>
    </location>
</feature>
<feature type="region of interest" description="Disordered" evidence="1">
    <location>
        <begin position="1"/>
        <end position="20"/>
    </location>
</feature>
<feature type="region of interest" description="Disordered" evidence="1">
    <location>
        <begin position="326"/>
        <end position="385"/>
    </location>
</feature>
<feature type="compositionally biased region" description="Basic and acidic residues" evidence="1">
    <location>
        <begin position="8"/>
        <end position="20"/>
    </location>
</feature>
<feature type="compositionally biased region" description="Basic and acidic residues" evidence="1">
    <location>
        <begin position="339"/>
        <end position="351"/>
    </location>
</feature>
<feature type="compositionally biased region" description="Basic and acidic residues" evidence="1">
    <location>
        <begin position="364"/>
        <end position="385"/>
    </location>
</feature>
<proteinExistence type="evidence at transcript level"/>
<sequence>MDDELDYGSDHSIHGDVREDLSDSELQLPKDRLDAIIDRKEKIATEKAFGINDSSDKHLNVSIAETAALRKEIGASDQNSHLDSIYAHGVEAMDEFEIQKMFANFRPEKVWKKDNVAMVQFQYRRDVAAMMLNMSKMMRRVRGRKKADEEGEVLSDDDDVEEGQIMQEKDDDVELIEDLKPNEKGIVASEKNNEFITVDINAREVPNGKWRVLTKHVPANMFVIIRYATTDEYQTMVTSDRSQVKKTGVKRGNDSFWTHESSNRGGLNVFDKEGKELEWDYEHDTRFYNEDKNEEKVEKVKLPQGIKIKGRGAVKCGFLFGEGSSSLASDDTTPVKKRRTDEKDYEKDDIVSRQGSSAHAIRPGRVERPIRERIQFPGREDPDEY</sequence>
<keyword id="KW-1185">Reference proteome</keyword>
<reference key="1">
    <citation type="journal article" date="1993" name="Cell">
        <title>Operons in C. elegans: polycistronic mRNA precursors are processed by trans-splicing of SL2 to downstream coding regions.</title>
        <authorList>
            <person name="Spieth J."/>
            <person name="Brooke G."/>
            <person name="Kuersten S."/>
            <person name="Lea K."/>
            <person name="Blumenthal T."/>
        </authorList>
    </citation>
    <scope>NUCLEOTIDE SEQUENCE [MRNA]</scope>
    <source>
        <strain>Bristol N2</strain>
    </source>
</reference>
<reference key="2">
    <citation type="journal article" date="1998" name="Science">
        <title>Genome sequence of the nematode C. elegans: a platform for investigating biology.</title>
        <authorList>
            <consortium name="The C. elegans sequencing consortium"/>
        </authorList>
    </citation>
    <scope>NUCLEOTIDE SEQUENCE [LARGE SCALE GENOMIC DNA]</scope>
    <source>
        <strain>Bristol N2</strain>
    </source>
</reference>